<accession>P0DQY5</accession>
<proteinExistence type="evidence at protein level"/>
<reference key="1">
    <citation type="journal article" date="2022" name="Molecules">
        <title>Anti-ovarian cancer conotoxins identified from Conus venom.</title>
        <authorList>
            <person name="Ju S."/>
            <person name="Zhang Y."/>
            <person name="Guo X."/>
            <person name="Yan Q."/>
            <person name="Liu S."/>
            <person name="Ma B."/>
            <person name="Zhang M."/>
            <person name="Bao J."/>
            <person name="Luo S."/>
            <person name="Fu Y."/>
        </authorList>
    </citation>
    <scope>PROTEIN SEQUENCE</scope>
    <scope>IDENTIFICATION BY MASS SPECTROMETRY</scope>
    <scope>SUBCELLULAR LOCATION</scope>
    <source>
        <tissue>Venom</tissue>
    </source>
</reference>
<keyword id="KW-0903">Direct protein sequencing</keyword>
<keyword id="KW-0964">Secreted</keyword>
<protein>
    <recommendedName>
        <fullName evidence="2">Conopeptide Vi003</fullName>
    </recommendedName>
</protein>
<organism>
    <name type="scientific">Conus virgo</name>
    <name type="common">Virgin cone</name>
    <dbReference type="NCBI Taxonomy" id="89427"/>
    <lineage>
        <taxon>Eukaryota</taxon>
        <taxon>Metazoa</taxon>
        <taxon>Spiralia</taxon>
        <taxon>Lophotrochozoa</taxon>
        <taxon>Mollusca</taxon>
        <taxon>Gastropoda</taxon>
        <taxon>Caenogastropoda</taxon>
        <taxon>Neogastropoda</taxon>
        <taxon>Conoidea</taxon>
        <taxon>Conidae</taxon>
        <taxon>Conus</taxon>
        <taxon>Virgiconus</taxon>
    </lineage>
</organism>
<comment type="subcellular location">
    <subcellularLocation>
        <location evidence="1">Secreted</location>
    </subcellularLocation>
</comment>
<comment type="tissue specificity">
    <text evidence="4">Expressed by the venom gland.</text>
</comment>
<comment type="miscellaneous">
    <text evidence="3">The mature peptide does not contain cysteine residue.</text>
</comment>
<feature type="peptide" id="PRO_0000457917" description="Conopeptide Vi003" evidence="1">
    <location>
        <begin position="1"/>
        <end position="13"/>
    </location>
</feature>
<feature type="unsure residue" description="L or I" evidence="4">
    <location>
        <position position="10"/>
    </location>
</feature>
<feature type="unsure residue" description="L or I" evidence="4">
    <location>
        <position position="11"/>
    </location>
</feature>
<evidence type="ECO:0000269" key="1">
    <source>
    </source>
</evidence>
<evidence type="ECO:0000303" key="2">
    <source>
    </source>
</evidence>
<evidence type="ECO:0000305" key="3"/>
<evidence type="ECO:0000305" key="4">
    <source>
    </source>
</evidence>
<dbReference type="GO" id="GO:0005576">
    <property type="term" value="C:extracellular region"/>
    <property type="evidence" value="ECO:0007669"/>
    <property type="project" value="UniProtKB-SubCell"/>
</dbReference>
<name>CU03_CONVR</name>
<sequence>NTESTKGESLLGK</sequence>